<protein>
    <recommendedName>
        <fullName evidence="1">Cleavage and polyadenylation specificity factor subunit 6</fullName>
    </recommendedName>
</protein>
<proteinExistence type="evidence at transcript level"/>
<gene>
    <name evidence="1" type="primary">CPSF6</name>
    <name type="ORF">RCJMB04_7p13</name>
</gene>
<reference key="1">
    <citation type="journal article" date="2005" name="Genome Biol.">
        <title>Full-length cDNAs from chicken bursal lymphocytes to facilitate gene function analysis.</title>
        <authorList>
            <person name="Caldwell R.B."/>
            <person name="Kierzek A.M."/>
            <person name="Arakawa H."/>
            <person name="Bezzubov Y."/>
            <person name="Zaim J."/>
            <person name="Fiedler P."/>
            <person name="Kutter S."/>
            <person name="Blagodatski A."/>
            <person name="Kostovska D."/>
            <person name="Koter M."/>
            <person name="Plachy J."/>
            <person name="Carninci P."/>
            <person name="Hayashizaki Y."/>
            <person name="Buerstedde J.-M."/>
        </authorList>
    </citation>
    <scope>NUCLEOTIDE SEQUENCE [LARGE SCALE MRNA]</scope>
    <source>
        <strain>CB</strain>
        <tissue>Bursa of Fabricius</tissue>
    </source>
</reference>
<comment type="function">
    <text evidence="1">Component of the cleavage factor Im (CFIm) complex that functions as an activator of the pre-mRNA 3'-end cleavage and polyadenylation processing required for the maturation of pre-mRNA into functional mRNAs. CFIm contributes to the recruitment of multiprotein complexes on specific sequences on the pre-mRNA 3'-end, so called cleavage and polyadenylation signals (pA signals). Most pre-mRNAs contain multiple pA signals, resulting in alternative cleavage and polyadenylation (APA) producing mRNAs with variable 3'-end formation. The CFIm complex acts as a key regulator of cleavage and polyadenylation site choice during APA through its binding to 5'-UGUA-3' elements localized in the 3'-untranslated region (UTR) for a huge number of pre-mRNAs. Plays a role in mRNA export.</text>
</comment>
<comment type="subunit">
    <text evidence="1">Component of the cleavage factor Im (CFIm) complex.</text>
</comment>
<comment type="subcellular location">
    <subcellularLocation>
        <location evidence="1">Nucleus</location>
    </subcellularLocation>
    <subcellularLocation>
        <location evidence="1">Nucleus</location>
        <location evidence="1">Nucleoplasm</location>
    </subcellularLocation>
    <subcellularLocation>
        <location evidence="1">Nucleus speckle</location>
    </subcellularLocation>
    <subcellularLocation>
        <location evidence="1">Cytoplasm</location>
    </subcellularLocation>
    <text evidence="1">Shuttles between the nucleus and the cytoplasm.</text>
</comment>
<comment type="similarity">
    <text evidence="4">Belongs to the RRM CPSF6/7 family.</text>
</comment>
<dbReference type="EMBL" id="AJ719900">
    <property type="protein sequence ID" value="CAG31559.1"/>
    <property type="molecule type" value="mRNA"/>
</dbReference>
<dbReference type="RefSeq" id="NP_001034360.2">
    <property type="nucleotide sequence ID" value="NM_001039271.2"/>
</dbReference>
<dbReference type="SMR" id="Q5ZL34"/>
<dbReference type="FunCoup" id="Q5ZL34">
    <property type="interactions" value="3036"/>
</dbReference>
<dbReference type="STRING" id="9031.ENSGALP00000049306"/>
<dbReference type="GlyGen" id="Q5ZL34">
    <property type="glycosylation" value="1 site"/>
</dbReference>
<dbReference type="PaxDb" id="9031-ENSGALP00000016173"/>
<dbReference type="GeneID" id="417844"/>
<dbReference type="KEGG" id="gga:417844"/>
<dbReference type="CTD" id="11052"/>
<dbReference type="VEuPathDB" id="HostDB:geneid_417844"/>
<dbReference type="eggNOG" id="KOG4849">
    <property type="taxonomic scope" value="Eukaryota"/>
</dbReference>
<dbReference type="HOGENOM" id="CLU_025289_1_0_1"/>
<dbReference type="InParanoid" id="Q5ZL34"/>
<dbReference type="OrthoDB" id="10065185at2759"/>
<dbReference type="PhylomeDB" id="Q5ZL34"/>
<dbReference type="PRO" id="PR:Q5ZL34"/>
<dbReference type="Proteomes" id="UP000000539">
    <property type="component" value="Unassembled WGS sequence"/>
</dbReference>
<dbReference type="GO" id="GO:0005737">
    <property type="term" value="C:cytoplasm"/>
    <property type="evidence" value="ECO:0000250"/>
    <property type="project" value="UniProtKB"/>
</dbReference>
<dbReference type="GO" id="GO:0035061">
    <property type="term" value="C:interchromatin granule"/>
    <property type="evidence" value="ECO:0000250"/>
    <property type="project" value="UniProtKB"/>
</dbReference>
<dbReference type="GO" id="GO:0005847">
    <property type="term" value="C:mRNA cleavage and polyadenylation specificity factor complex"/>
    <property type="evidence" value="ECO:0000318"/>
    <property type="project" value="GO_Central"/>
</dbReference>
<dbReference type="GO" id="GO:0005849">
    <property type="term" value="C:mRNA cleavage factor complex"/>
    <property type="evidence" value="ECO:0000250"/>
    <property type="project" value="UniProtKB"/>
</dbReference>
<dbReference type="GO" id="GO:0016607">
    <property type="term" value="C:nuclear speck"/>
    <property type="evidence" value="ECO:0000250"/>
    <property type="project" value="UniProtKB"/>
</dbReference>
<dbReference type="GO" id="GO:0005654">
    <property type="term" value="C:nucleoplasm"/>
    <property type="evidence" value="ECO:0000250"/>
    <property type="project" value="UniProtKB"/>
</dbReference>
<dbReference type="GO" id="GO:0005634">
    <property type="term" value="C:nucleus"/>
    <property type="evidence" value="ECO:0000250"/>
    <property type="project" value="UniProtKB"/>
</dbReference>
<dbReference type="GO" id="GO:0042382">
    <property type="term" value="C:paraspeckles"/>
    <property type="evidence" value="ECO:0000250"/>
    <property type="project" value="UniProtKB"/>
</dbReference>
<dbReference type="GO" id="GO:0005726">
    <property type="term" value="C:perichromatin fibrils"/>
    <property type="evidence" value="ECO:0000250"/>
    <property type="project" value="UniProtKB"/>
</dbReference>
<dbReference type="GO" id="GO:0003729">
    <property type="term" value="F:mRNA binding"/>
    <property type="evidence" value="ECO:0000250"/>
    <property type="project" value="UniProtKB"/>
</dbReference>
<dbReference type="GO" id="GO:0180010">
    <property type="term" value="P:co-transcriptional mRNA 3'-end processing, cleavage and polyadenylation pathway"/>
    <property type="evidence" value="ECO:0000250"/>
    <property type="project" value="UniProtKB"/>
</dbReference>
<dbReference type="GO" id="GO:0110104">
    <property type="term" value="P:mRNA alternative polyadenylation"/>
    <property type="evidence" value="ECO:0000250"/>
    <property type="project" value="UniProtKB"/>
</dbReference>
<dbReference type="GO" id="GO:0046833">
    <property type="term" value="P:positive regulation of RNA export from nucleus"/>
    <property type="evidence" value="ECO:0000250"/>
    <property type="project" value="UniProtKB"/>
</dbReference>
<dbReference type="GO" id="GO:0051290">
    <property type="term" value="P:protein heterotetramerization"/>
    <property type="evidence" value="ECO:0000250"/>
    <property type="project" value="UniProtKB"/>
</dbReference>
<dbReference type="CDD" id="cd12643">
    <property type="entry name" value="RRM_CFIm68"/>
    <property type="match status" value="1"/>
</dbReference>
<dbReference type="FunFam" id="3.30.70.330:FF:000081">
    <property type="entry name" value="Cleavage and polyadenylation specificity factor subunit 6"/>
    <property type="match status" value="1"/>
</dbReference>
<dbReference type="Gene3D" id="3.30.70.330">
    <property type="match status" value="1"/>
</dbReference>
<dbReference type="InterPro" id="IPR034772">
    <property type="entry name" value="CPSF6/7"/>
</dbReference>
<dbReference type="InterPro" id="IPR034769">
    <property type="entry name" value="CPSF6_RRM"/>
</dbReference>
<dbReference type="InterPro" id="IPR012677">
    <property type="entry name" value="Nucleotide-bd_a/b_plait_sf"/>
</dbReference>
<dbReference type="InterPro" id="IPR035979">
    <property type="entry name" value="RBD_domain_sf"/>
</dbReference>
<dbReference type="InterPro" id="IPR000504">
    <property type="entry name" value="RRM_dom"/>
</dbReference>
<dbReference type="PANTHER" id="PTHR23204">
    <property type="entry name" value="CLEAVAGE AND POLYADENYLATION SPECIFIC FACTOR"/>
    <property type="match status" value="1"/>
</dbReference>
<dbReference type="Pfam" id="PF00076">
    <property type="entry name" value="RRM_1"/>
    <property type="match status" value="1"/>
</dbReference>
<dbReference type="SMART" id="SM00360">
    <property type="entry name" value="RRM"/>
    <property type="match status" value="1"/>
</dbReference>
<dbReference type="SUPFAM" id="SSF54928">
    <property type="entry name" value="RNA-binding domain, RBD"/>
    <property type="match status" value="1"/>
</dbReference>
<dbReference type="PROSITE" id="PS50102">
    <property type="entry name" value="RRM"/>
    <property type="match status" value="1"/>
</dbReference>
<sequence>MADGVDHIDIYADVGEEFNQEAEYGGHDQIDLYDDVISPSANNGDAPEDRDYMDSLPPSVGDDVGKGAAPNVVYTYTGKRIALYIGNLTWWTTDEDLTEAVHSLGVNDILEIKFFENRANGQSKGFALVGVGSEASSKKLMDLLPKRELHGQNPVVTPCNKQFLSQFEMQSRKTTQSGQMSGEGKAGPPGGSSRAAFPPSNRGRGRFPGAIPGGDRFPGPAGPGGPPHRSQLDKLPTRPPLGPPGPPGPPGPPPPGQVLPPPLAGPPNRGDRPPPPVLFPGQPFGQPPLGPLPPGPPPPVPGYGPPPGPPPPQQGPPPPPGPFPPRPPGPLGPPLTLAPPPHLPGPPPGAPPPAPHVNPAFFPPPANSGIPTSDSRGPPPTDPYGRPPPYDRGDYGPPGREMDAARTPLSEAEFEEIMNRNRAISSSAISRAVSDASAGDYGSAIETLVTAISLIKQSKVSADDRCKVLISSLQDCLHGIESKSYGSGSRRERSRERDHSRSREKSRRHKSRSRDRHDDYYRERSRERERHRDRDRDRDRERDREREYRHR</sequence>
<accession>Q5ZL34</accession>
<organism>
    <name type="scientific">Gallus gallus</name>
    <name type="common">Chicken</name>
    <dbReference type="NCBI Taxonomy" id="9031"/>
    <lineage>
        <taxon>Eukaryota</taxon>
        <taxon>Metazoa</taxon>
        <taxon>Chordata</taxon>
        <taxon>Craniata</taxon>
        <taxon>Vertebrata</taxon>
        <taxon>Euteleostomi</taxon>
        <taxon>Archelosauria</taxon>
        <taxon>Archosauria</taxon>
        <taxon>Dinosauria</taxon>
        <taxon>Saurischia</taxon>
        <taxon>Theropoda</taxon>
        <taxon>Coelurosauria</taxon>
        <taxon>Aves</taxon>
        <taxon>Neognathae</taxon>
        <taxon>Galloanserae</taxon>
        <taxon>Galliformes</taxon>
        <taxon>Phasianidae</taxon>
        <taxon>Phasianinae</taxon>
        <taxon>Gallus</taxon>
    </lineage>
</organism>
<evidence type="ECO:0000250" key="1">
    <source>
        <dbReference type="UniProtKB" id="Q16630"/>
    </source>
</evidence>
<evidence type="ECO:0000255" key="2">
    <source>
        <dbReference type="PROSITE-ProRule" id="PRU00176"/>
    </source>
</evidence>
<evidence type="ECO:0000256" key="3">
    <source>
        <dbReference type="SAM" id="MobiDB-lite"/>
    </source>
</evidence>
<evidence type="ECO:0000305" key="4"/>
<feature type="chain" id="PRO_0000081524" description="Cleavage and polyadenylation specificity factor subunit 6">
    <location>
        <begin position="1"/>
        <end position="551"/>
    </location>
</feature>
<feature type="domain" description="RRM" evidence="2">
    <location>
        <begin position="81"/>
        <end position="161"/>
    </location>
</feature>
<feature type="region of interest" description="Disordered" evidence="3">
    <location>
        <begin position="169"/>
        <end position="410"/>
    </location>
</feature>
<feature type="region of interest" description="Disordered" evidence="3">
    <location>
        <begin position="477"/>
        <end position="551"/>
    </location>
</feature>
<feature type="compositionally biased region" description="Polar residues" evidence="3">
    <location>
        <begin position="169"/>
        <end position="180"/>
    </location>
</feature>
<feature type="compositionally biased region" description="Pro residues" evidence="3">
    <location>
        <begin position="237"/>
        <end position="265"/>
    </location>
</feature>
<feature type="compositionally biased region" description="Pro residues" evidence="3">
    <location>
        <begin position="285"/>
        <end position="366"/>
    </location>
</feature>
<feature type="compositionally biased region" description="Pro residues" evidence="3">
    <location>
        <begin position="377"/>
        <end position="388"/>
    </location>
</feature>
<feature type="compositionally biased region" description="Basic and acidic residues" evidence="3">
    <location>
        <begin position="389"/>
        <end position="404"/>
    </location>
</feature>
<feature type="compositionally biased region" description="Basic and acidic residues" evidence="3">
    <location>
        <begin position="489"/>
        <end position="503"/>
    </location>
</feature>
<feature type="compositionally biased region" description="Basic residues" evidence="3">
    <location>
        <begin position="504"/>
        <end position="514"/>
    </location>
</feature>
<feature type="compositionally biased region" description="Basic and acidic residues" evidence="3">
    <location>
        <begin position="515"/>
        <end position="551"/>
    </location>
</feature>
<feature type="modified residue" description="Phosphothreonine" evidence="1">
    <location>
        <position position="157"/>
    </location>
</feature>
<feature type="modified residue" description="Phosphoserine" evidence="1">
    <location>
        <position position="494"/>
    </location>
</feature>
<feature type="modified residue" description="Phosphoserine" evidence="1">
    <location>
        <position position="500"/>
    </location>
</feature>
<feature type="modified residue" description="Phosphoserine" evidence="1">
    <location>
        <position position="511"/>
    </location>
</feature>
<feature type="modified residue" description="Phosphoserine" evidence="1">
    <location>
        <position position="513"/>
    </location>
</feature>
<feature type="modified residue" description="Phosphoserine" evidence="1">
    <location>
        <position position="525"/>
    </location>
</feature>
<name>CPSF6_CHICK</name>
<keyword id="KW-0963">Cytoplasm</keyword>
<keyword id="KW-0507">mRNA processing</keyword>
<keyword id="KW-0539">Nucleus</keyword>
<keyword id="KW-0597">Phosphoprotein</keyword>
<keyword id="KW-1185">Reference proteome</keyword>